<name>YFDN_ECOLI</name>
<keyword id="KW-1185">Reference proteome</keyword>
<gene>
    <name type="primary">yfdN</name>
    <name type="synonym">yzyA</name>
    <name type="ordered locus">b2357</name>
    <name type="ordered locus">JW5385</name>
</gene>
<dbReference type="EMBL" id="U00096">
    <property type="protein sequence ID" value="AAC75416.1"/>
    <property type="molecule type" value="Genomic_DNA"/>
</dbReference>
<dbReference type="EMBL" id="AP009048">
    <property type="protein sequence ID" value="BAE76697.1"/>
    <property type="molecule type" value="Genomic_DNA"/>
</dbReference>
<dbReference type="EMBL" id="X04387">
    <property type="status" value="NOT_ANNOTATED_CDS"/>
    <property type="molecule type" value="Genomic_DNA"/>
</dbReference>
<dbReference type="PIR" id="B65009">
    <property type="entry name" value="B65009"/>
</dbReference>
<dbReference type="RefSeq" id="NP_416858.1">
    <property type="nucleotide sequence ID" value="NC_000913.3"/>
</dbReference>
<dbReference type="RefSeq" id="WP_001393497.1">
    <property type="nucleotide sequence ID" value="NZ_LN832404.1"/>
</dbReference>
<dbReference type="SMR" id="P76510"/>
<dbReference type="BioGRID" id="4262076">
    <property type="interactions" value="17"/>
</dbReference>
<dbReference type="FunCoup" id="P76510">
    <property type="interactions" value="96"/>
</dbReference>
<dbReference type="STRING" id="511145.b2357"/>
<dbReference type="PaxDb" id="511145-b2357"/>
<dbReference type="EnsemblBacteria" id="AAC75416">
    <property type="protein sequence ID" value="AAC75416"/>
    <property type="gene ID" value="b2357"/>
</dbReference>
<dbReference type="GeneID" id="946419"/>
<dbReference type="KEGG" id="ecj:JW5385"/>
<dbReference type="KEGG" id="eco:b2357"/>
<dbReference type="PATRIC" id="fig|511145.12.peg.2453"/>
<dbReference type="EchoBASE" id="EB2783"/>
<dbReference type="eggNOG" id="ENOG5033KP0">
    <property type="taxonomic scope" value="Bacteria"/>
</dbReference>
<dbReference type="HOGENOM" id="CLU_117195_0_0_6"/>
<dbReference type="InParanoid" id="P76510"/>
<dbReference type="OMA" id="QCRRVAH"/>
<dbReference type="OrthoDB" id="6611998at2"/>
<dbReference type="BioCyc" id="EcoCyc:G7226-MONOMER"/>
<dbReference type="PRO" id="PR:P76510"/>
<dbReference type="Proteomes" id="UP000000625">
    <property type="component" value="Chromosome"/>
</dbReference>
<dbReference type="InterPro" id="IPR024684">
    <property type="entry name" value="Tscrpt_act_PerC/SfV_Orf40"/>
</dbReference>
<dbReference type="Pfam" id="PF06069">
    <property type="entry name" value="PerC"/>
    <property type="match status" value="1"/>
</dbReference>
<evidence type="ECO:0000305" key="1"/>
<feature type="chain" id="PRO_0000169206" description="Uncharacterized protein YfdN">
    <location>
        <begin position="1"/>
        <end position="164"/>
    </location>
</feature>
<feature type="sequence conflict" description="In Ref. 3." evidence="1" ref="3">
    <original>P</original>
    <variation>L</variation>
    <location>
        <position position="73"/>
    </location>
</feature>
<protein>
    <recommendedName>
        <fullName>Uncharacterized protein YfdN</fullName>
    </recommendedName>
</protein>
<reference key="1">
    <citation type="journal article" date="1997" name="Science">
        <title>The complete genome sequence of Escherichia coli K-12.</title>
        <authorList>
            <person name="Blattner F.R."/>
            <person name="Plunkett G. III"/>
            <person name="Bloch C.A."/>
            <person name="Perna N.T."/>
            <person name="Burland V."/>
            <person name="Riley M."/>
            <person name="Collado-Vides J."/>
            <person name="Glasner J.D."/>
            <person name="Rode C.K."/>
            <person name="Mayhew G.F."/>
            <person name="Gregor J."/>
            <person name="Davis N.W."/>
            <person name="Kirkpatrick H.A."/>
            <person name="Goeden M.A."/>
            <person name="Rose D.J."/>
            <person name="Mau B."/>
            <person name="Shao Y."/>
        </authorList>
    </citation>
    <scope>NUCLEOTIDE SEQUENCE [LARGE SCALE GENOMIC DNA]</scope>
    <source>
        <strain>K12 / MG1655 / ATCC 47076</strain>
    </source>
</reference>
<reference key="2">
    <citation type="journal article" date="2006" name="Mol. Syst. Biol.">
        <title>Highly accurate genome sequences of Escherichia coli K-12 strains MG1655 and W3110.</title>
        <authorList>
            <person name="Hayashi K."/>
            <person name="Morooka N."/>
            <person name="Yamamoto Y."/>
            <person name="Fujita K."/>
            <person name="Isono K."/>
            <person name="Choi S."/>
            <person name="Ohtsubo E."/>
            <person name="Baba T."/>
            <person name="Wanner B.L."/>
            <person name="Mori H."/>
            <person name="Horiuchi T."/>
        </authorList>
    </citation>
    <scope>NUCLEOTIDE SEQUENCE [LARGE SCALE GENOMIC DNA]</scope>
    <source>
        <strain>K12 / W3110 / ATCC 27325 / DSM 5911</strain>
    </source>
</reference>
<reference key="3">
    <citation type="journal article" date="1986" name="Nucleic Acids Res.">
        <title>Nucleotide sequence of the gene responsible for D-xylose uptake in Escherichia coli.</title>
        <authorList>
            <person name="Kurose N."/>
            <person name="Watanabe K."/>
            <person name="Kimura A."/>
        </authorList>
    </citation>
    <scope>NUCLEOTIDE SEQUENCE [GENOMIC DNA] OF 70-164</scope>
</reference>
<accession>P76510</accession>
<accession>Q2MAK9</accession>
<sequence length="164" mass="18766">MSMSLLNDVQKFIEAHPGCTSGDIADAFAGYSRQRVLQSASKLRQSGRVAHRCEGDTHRHFPRLTERAQDPEPQPVRETRPVRNFYVGTNDPRVILCLTRQAEELESRGLYRRAATVWMAAFRESHSQPERNNFLARRERCLRKSSKRAASGEEWYLSGNYVGA</sequence>
<proteinExistence type="predicted"/>
<organism>
    <name type="scientific">Escherichia coli (strain K12)</name>
    <dbReference type="NCBI Taxonomy" id="83333"/>
    <lineage>
        <taxon>Bacteria</taxon>
        <taxon>Pseudomonadati</taxon>
        <taxon>Pseudomonadota</taxon>
        <taxon>Gammaproteobacteria</taxon>
        <taxon>Enterobacterales</taxon>
        <taxon>Enterobacteriaceae</taxon>
        <taxon>Escherichia</taxon>
    </lineage>
</organism>